<name>RRM4_MYCMD</name>
<comment type="function">
    <text evidence="4 5 6 7 8 9 10 11">Key RNA-binding protein involved in the formation of polar-growing hyphae which is essential for infection by the plant pathogen (PubMed:15643068, PubMed:17105762, PubMed:19494833). During filamentation, assembles into particles that shuttle bidirectionally along microtubules to both poles (PubMed:17105762, PubMed:19494833, PubMed:30738139). The RRM4 transport particles are part of the endosomal mRNP transport that regulates polarity of the infectious hyphae by transporting distinct mRNAs encoding, for example, the ubiquitin fusion protein UBI1, the small G protein RHO3, or the septin CDC3, from the nucleus to cell poles (PubMed:17105762, PubMed:19494833, PubMed:22357951, PubMed:24355572, PubMed:25985087, PubMed:30738139). Recognizes a broad spectrum of cargo mRNAs and precisely binds at stop codons, which constitute landmark sites of translation, suggesting an intimate connection of mRNA transport and translation (PubMed:30552148). Also binds to the specific binding motif UAUG of cargo mRNAs via its third RRM (PubMed:30552148). Plus-end-directed KIN3, a kinesin-3 type motor, mediates anterograde transport of RRM4-containing mRNPs whereas split dynein DYM1-DYN2 functions in retrograde movement of mRNPs (PubMed:22357951).</text>
</comment>
<comment type="subunit">
    <text evidence="5 6 7 9 11 12">Part of large ribonucleoprotein complexes (mRNPs) containing RNA-binding proteins RRM4 and PAB1, endosome-binding protein UPA1, core scaffold protein UPA2 and associated factor GRP1 (PubMed:17105762, PubMed:19494833, PubMed:22357951, PubMed:30738139, PubMed:31338952). Interacts (via PABC domain) with UPA1 (via PAM2 domain) (PubMed:25985087).</text>
</comment>
<comment type="subcellular location">
    <subcellularLocation>
        <location evidence="5 6 9">Cytoplasm</location>
        <location evidence="5 6 9">Cytoskeleton</location>
    </subcellularLocation>
    <subcellularLocation>
        <location evidence="7 8 9">Endosome</location>
    </subcellularLocation>
    <text evidence="5 6 7 9">Assembles into particles that shuttle along microtubules to both poles (PubMed:17105762, PubMed:19494833). Shuttles with RAB5A-positive endosomes along microtubules (PubMed:22357951, PubMed:25985087).</text>
</comment>
<comment type="domain">
    <text evidence="5 6 10">The RRM1, RRM3 and PABC domains are important for RNA_binding and polar growth (PubMed:17105762, PubMed:19494833). RRM3 recognizes the specific binding motif UAUG of cargo mRNAs (PubMed:30552148).</text>
</comment>
<comment type="disruption phenotype">
    <text evidence="4 5 9">Reduces filamentous growth and virulence (PubMed:15643068). Disturbs polar growth of filaments (PubMed:17105762, PubMed:25985087).</text>
</comment>
<comment type="similarity">
    <text evidence="14">Belongs to the polyadenylate-binding protein type-1 family.</text>
</comment>
<protein>
    <recommendedName>
        <fullName evidence="13">RNA-binding protein RRM4</fullName>
    </recommendedName>
</protein>
<proteinExistence type="evidence at protein level"/>
<evidence type="ECO:0000255" key="1">
    <source>
        <dbReference type="PROSITE-ProRule" id="PRU00176"/>
    </source>
</evidence>
<evidence type="ECO:0000255" key="2">
    <source>
        <dbReference type="PROSITE-ProRule" id="PRU00641"/>
    </source>
</evidence>
<evidence type="ECO:0000256" key="3">
    <source>
        <dbReference type="SAM" id="MobiDB-lite"/>
    </source>
</evidence>
<evidence type="ECO:0000269" key="4">
    <source>
    </source>
</evidence>
<evidence type="ECO:0000269" key="5">
    <source>
    </source>
</evidence>
<evidence type="ECO:0000269" key="6">
    <source>
    </source>
</evidence>
<evidence type="ECO:0000269" key="7">
    <source>
    </source>
</evidence>
<evidence type="ECO:0000269" key="8">
    <source>
    </source>
</evidence>
<evidence type="ECO:0000269" key="9">
    <source>
    </source>
</evidence>
<evidence type="ECO:0000269" key="10">
    <source>
    </source>
</evidence>
<evidence type="ECO:0000269" key="11">
    <source>
    </source>
</evidence>
<evidence type="ECO:0000269" key="12">
    <source>
    </source>
</evidence>
<evidence type="ECO:0000303" key="13">
    <source>
    </source>
</evidence>
<evidence type="ECO:0000305" key="14"/>
<evidence type="ECO:0007829" key="15">
    <source>
        <dbReference type="PDB" id="7PZE"/>
    </source>
</evidence>
<evidence type="ECO:0007829" key="16">
    <source>
        <dbReference type="PDB" id="8S6N"/>
    </source>
</evidence>
<organism>
    <name type="scientific">Mycosarcoma maydis</name>
    <name type="common">Corn smut fungus</name>
    <name type="synonym">Ustilago maydis</name>
    <dbReference type="NCBI Taxonomy" id="5270"/>
    <lineage>
        <taxon>Eukaryota</taxon>
        <taxon>Fungi</taxon>
        <taxon>Dikarya</taxon>
        <taxon>Basidiomycota</taxon>
        <taxon>Ustilaginomycotina</taxon>
        <taxon>Ustilaginomycetes</taxon>
        <taxon>Ustilaginales</taxon>
        <taxon>Ustilaginaceae</taxon>
        <taxon>Mycosarcoma</taxon>
    </lineage>
</organism>
<feature type="chain" id="PRO_0000454342" description="RNA-binding protein RRM4">
    <location>
        <begin position="1"/>
        <end position="792"/>
    </location>
</feature>
<feature type="domain" description="RRM 1" evidence="1">
    <location>
        <begin position="72"/>
        <end position="145"/>
    </location>
</feature>
<feature type="domain" description="RRM 2" evidence="1">
    <location>
        <begin position="154"/>
        <end position="235"/>
    </location>
</feature>
<feature type="domain" description="RRM 3" evidence="1">
    <location>
        <begin position="321"/>
        <end position="398"/>
    </location>
</feature>
<feature type="domain" description="PABC" evidence="2">
    <location>
        <begin position="715"/>
        <end position="792"/>
    </location>
</feature>
<feature type="region of interest" description="Disordered" evidence="3">
    <location>
        <begin position="37"/>
        <end position="60"/>
    </location>
</feature>
<feature type="region of interest" description="Disordered" evidence="3">
    <location>
        <begin position="412"/>
        <end position="438"/>
    </location>
</feature>
<feature type="region of interest" description="Disordered" evidence="3">
    <location>
        <begin position="630"/>
        <end position="649"/>
    </location>
</feature>
<feature type="compositionally biased region" description="Low complexity" evidence="3">
    <location>
        <begin position="412"/>
        <end position="424"/>
    </location>
</feature>
<feature type="compositionally biased region" description="Polar residues" evidence="3">
    <location>
        <begin position="640"/>
        <end position="649"/>
    </location>
</feature>
<feature type="mutagenesis site" description="Leads to a reduction of RNA-binding." evidence="5">
    <original>TVEF</original>
    <variation>AAAA</variation>
    <location>
        <begin position="116"/>
        <end position="119"/>
    </location>
</feature>
<feature type="mutagenesis site" description="Leads to a reduction of RNA-binding." evidence="5">
    <original>FVSF</original>
    <variation>AAAA</variation>
    <location>
        <begin position="365"/>
        <end position="368"/>
    </location>
</feature>
<feature type="mutagenesis site" description="Leads to a reduction of RNA-binding; when associated with A-743, G-751 and A-753." evidence="5">
    <original>F</original>
    <variation>A</variation>
    <location>
        <position position="740"/>
    </location>
</feature>
<feature type="mutagenesis site" description="Leads to a reduction of RNA-binding; when associated with A-740, G-751 and A-753." evidence="5">
    <original>I</original>
    <variation>A</variation>
    <location>
        <position position="743"/>
    </location>
</feature>
<feature type="mutagenesis site" description="Leads to a reduction of RNA-binding; when associated with A-740, A-743 and A-753." evidence="5">
    <original>A</original>
    <variation>G</variation>
    <location>
        <position position="751"/>
    </location>
</feature>
<feature type="mutagenesis site" description="Leads to a reduction of RNA-binding; when associated with A-740, A-743 and G-753." evidence="5">
    <original>K</original>
    <variation>A</variation>
    <location>
        <position position="753"/>
    </location>
</feature>
<feature type="helix" evidence="15">
    <location>
        <begin position="570"/>
        <end position="582"/>
    </location>
</feature>
<feature type="strand" evidence="15">
    <location>
        <begin position="586"/>
        <end position="588"/>
    </location>
</feature>
<feature type="helix" evidence="15">
    <location>
        <begin position="590"/>
        <end position="598"/>
    </location>
</feature>
<feature type="helix" evidence="15">
    <location>
        <begin position="602"/>
        <end position="610"/>
    </location>
</feature>
<feature type="helix" evidence="15">
    <location>
        <begin position="612"/>
        <end position="628"/>
    </location>
</feature>
<feature type="helix" evidence="16">
    <location>
        <begin position="680"/>
        <end position="684"/>
    </location>
</feature>
<feature type="helix" evidence="16">
    <location>
        <begin position="688"/>
        <end position="696"/>
    </location>
</feature>
<feature type="helix" evidence="16">
    <location>
        <begin position="710"/>
        <end position="723"/>
    </location>
</feature>
<feature type="helix" evidence="16">
    <location>
        <begin position="728"/>
        <end position="745"/>
    </location>
</feature>
<feature type="helix" evidence="16">
    <location>
        <begin position="751"/>
        <end position="761"/>
    </location>
</feature>
<feature type="helix" evidence="16">
    <location>
        <begin position="764"/>
        <end position="773"/>
    </location>
</feature>
<feature type="helix" evidence="16">
    <location>
        <begin position="775"/>
        <end position="787"/>
    </location>
</feature>
<feature type="turn" evidence="16">
    <location>
        <begin position="788"/>
        <end position="791"/>
    </location>
</feature>
<gene>
    <name evidence="13" type="primary">RRM4</name>
    <name type="ORF">UMAG_10836</name>
</gene>
<dbReference type="EMBL" id="CM003147">
    <property type="protein sequence ID" value="KIS68744.1"/>
    <property type="molecule type" value="Genomic_DNA"/>
</dbReference>
<dbReference type="RefSeq" id="XP_011389820.1">
    <property type="nucleotide sequence ID" value="XM_011391518.1"/>
</dbReference>
<dbReference type="PDB" id="7PZE">
    <property type="method" value="X-ray"/>
    <property type="resolution" value="2.60 A"/>
    <property type="chains" value="A/B=421-792"/>
</dbReference>
<dbReference type="PDB" id="8S6N">
    <property type="method" value="X-ray"/>
    <property type="resolution" value="1.74 A"/>
    <property type="chains" value="A/B/D/G=676-792"/>
</dbReference>
<dbReference type="PDB" id="8S6O">
    <property type="method" value="X-ray"/>
    <property type="resolution" value="2.40 A"/>
    <property type="chains" value="A/C/D/F/I/K/M/O=679-792"/>
</dbReference>
<dbReference type="PDBsum" id="7PZE"/>
<dbReference type="PDBsum" id="8S6N"/>
<dbReference type="PDBsum" id="8S6O"/>
<dbReference type="SASBDB" id="A0A0D1DWZ5"/>
<dbReference type="SMR" id="A0A0D1DWZ5"/>
<dbReference type="STRING" id="237631.A0A0D1DWZ5"/>
<dbReference type="EnsemblFungi" id="KIS68744">
    <property type="protein sequence ID" value="KIS68744"/>
    <property type="gene ID" value="UMAG_10836"/>
</dbReference>
<dbReference type="GeneID" id="23566810"/>
<dbReference type="KEGG" id="uma:UMAG_10836"/>
<dbReference type="VEuPathDB" id="FungiDB:UMAG_10836"/>
<dbReference type="eggNOG" id="KOG0123">
    <property type="taxonomic scope" value="Eukaryota"/>
</dbReference>
<dbReference type="InParanoid" id="A0A0D1DWZ5"/>
<dbReference type="OrthoDB" id="6159137at2759"/>
<dbReference type="Proteomes" id="UP000000561">
    <property type="component" value="Chromosome 8"/>
</dbReference>
<dbReference type="GO" id="GO:0010494">
    <property type="term" value="C:cytoplasmic stress granule"/>
    <property type="evidence" value="ECO:0000318"/>
    <property type="project" value="GO_Central"/>
</dbReference>
<dbReference type="GO" id="GO:0005856">
    <property type="term" value="C:cytoskeleton"/>
    <property type="evidence" value="ECO:0007669"/>
    <property type="project" value="UniProtKB-SubCell"/>
</dbReference>
<dbReference type="GO" id="GO:0005829">
    <property type="term" value="C:cytosol"/>
    <property type="evidence" value="ECO:0000318"/>
    <property type="project" value="GO_Central"/>
</dbReference>
<dbReference type="GO" id="GO:0005768">
    <property type="term" value="C:endosome"/>
    <property type="evidence" value="ECO:0007669"/>
    <property type="project" value="UniProtKB-SubCell"/>
</dbReference>
<dbReference type="GO" id="GO:0005634">
    <property type="term" value="C:nucleus"/>
    <property type="evidence" value="ECO:0000318"/>
    <property type="project" value="GO_Central"/>
</dbReference>
<dbReference type="GO" id="GO:1990904">
    <property type="term" value="C:ribonucleoprotein complex"/>
    <property type="evidence" value="ECO:0000318"/>
    <property type="project" value="GO_Central"/>
</dbReference>
<dbReference type="GO" id="GO:0003730">
    <property type="term" value="F:mRNA 3'-UTR binding"/>
    <property type="evidence" value="ECO:0000318"/>
    <property type="project" value="GO_Central"/>
</dbReference>
<dbReference type="GO" id="GO:0008143">
    <property type="term" value="F:poly(A) binding"/>
    <property type="evidence" value="ECO:0000318"/>
    <property type="project" value="GO_Central"/>
</dbReference>
<dbReference type="GO" id="GO:0008266">
    <property type="term" value="F:poly(U) RNA binding"/>
    <property type="evidence" value="ECO:0000318"/>
    <property type="project" value="GO_Central"/>
</dbReference>
<dbReference type="GO" id="GO:0051028">
    <property type="term" value="P:mRNA transport"/>
    <property type="evidence" value="ECO:0007669"/>
    <property type="project" value="UniProtKB-KW"/>
</dbReference>
<dbReference type="CDD" id="cd00590">
    <property type="entry name" value="RRM_SF"/>
    <property type="match status" value="1"/>
</dbReference>
<dbReference type="FunFam" id="3.30.70.330:FF:002275">
    <property type="match status" value="1"/>
</dbReference>
<dbReference type="Gene3D" id="3.30.70.330">
    <property type="match status" value="2"/>
</dbReference>
<dbReference type="Gene3D" id="1.10.1900.10">
    <property type="entry name" value="c-terminal domain of poly(a) binding protein"/>
    <property type="match status" value="2"/>
</dbReference>
<dbReference type="InterPro" id="IPR012677">
    <property type="entry name" value="Nucleotide-bd_a/b_plait_sf"/>
</dbReference>
<dbReference type="InterPro" id="IPR036053">
    <property type="entry name" value="PABP-dom"/>
</dbReference>
<dbReference type="InterPro" id="IPR002004">
    <property type="entry name" value="PABP_HYD_C"/>
</dbReference>
<dbReference type="InterPro" id="IPR035979">
    <property type="entry name" value="RBD_domain_sf"/>
</dbReference>
<dbReference type="InterPro" id="IPR000504">
    <property type="entry name" value="RRM_dom"/>
</dbReference>
<dbReference type="PANTHER" id="PTHR24012">
    <property type="entry name" value="RNA BINDING PROTEIN"/>
    <property type="match status" value="1"/>
</dbReference>
<dbReference type="Pfam" id="PF00658">
    <property type="entry name" value="MLLE"/>
    <property type="match status" value="1"/>
</dbReference>
<dbReference type="Pfam" id="PF00076">
    <property type="entry name" value="RRM_1"/>
    <property type="match status" value="2"/>
</dbReference>
<dbReference type="SMART" id="SM00360">
    <property type="entry name" value="RRM"/>
    <property type="match status" value="3"/>
</dbReference>
<dbReference type="SUPFAM" id="SSF63570">
    <property type="entry name" value="PABC (PABP) domain"/>
    <property type="match status" value="1"/>
</dbReference>
<dbReference type="SUPFAM" id="SSF54928">
    <property type="entry name" value="RNA-binding domain, RBD"/>
    <property type="match status" value="2"/>
</dbReference>
<dbReference type="PROSITE" id="PS50102">
    <property type="entry name" value="RRM"/>
    <property type="match status" value="2"/>
</dbReference>
<keyword id="KW-0002">3D-structure</keyword>
<keyword id="KW-0963">Cytoplasm</keyword>
<keyword id="KW-0206">Cytoskeleton</keyword>
<keyword id="KW-0967">Endosome</keyword>
<keyword id="KW-0509">mRNA transport</keyword>
<keyword id="KW-1185">Reference proteome</keyword>
<keyword id="KW-0677">Repeat</keyword>
<keyword id="KW-0694">RNA-binding</keyword>
<keyword id="KW-0813">Transport</keyword>
<accession>A0A0D1DWZ5</accession>
<sequence>MSDSIYAPHNKHKLEAARAADAAADDAATVSALVEPTDSTAQASHAAEQTIDAHQQAGDVEPERCHPHLTRPLLYLSGVDATMTDKELAGLVFDQVLPVRLKIDRTVGEGQTASGTVEFQTLDKAEKAYATVRPPIQLRINQDASIREPHPSAKPRLVKQLPPTSDDAFVYDLFRPFGPLRRAQCLLTNPAGIHTGFKGMAVLEFYSEQDAQRAESEMHCSEVGGKSISVAIDTATRKVSAAAAEFRPSAAAFVPAGSMSPSAPSFDPYPAGSRSVSTGSAASIYATSGAAPTHDTRNGAQKGARVPLQYSSQASTYVDPCNLFIKNLDPNMESNDLFDTFKRFGHIVSARVMRDDNGKSREFGFVSFTTPDEAQQALQAMDNAKLGTKKIIVRLHEPKTMRQEKLAARYNAANADNSDMSSNSPPTEARKADKRQSRSYFKAGVPSDASGLVDEEQLRSLSTVVRNELLSGEFTRRIPKVSSVTEAQLDDVVGELLSLKLADAVEALNNPISLIQRISDAREQLAQKSASTLTAPSPAPLSAEHPAMLGIQAQRSVSSASSTGEGGASVKERERLLKAVISVTESGAPVEDITDMIASLPKKDRALALFNPEFLKQKVDEAKDILDITDESGEDLSPPRASSGSAPVPLSVQTPASAIFKDASNGQSSISPGAAEAYTLSTLAALPAAEIVRLANSQSSSGLPLPKADPATVKATDDFIDSLQGKAAHDQKQKLGDQLFKKIRTFGVKGAPKLTIHLLDSEDLRALAHLMNSYEDVLKEKVQHKVAAGLNK</sequence>
<reference key="1">
    <citation type="journal article" date="2006" name="Nature">
        <title>Insights from the genome of the biotrophic fungal plant pathogen Ustilago maydis.</title>
        <authorList>
            <person name="Kaemper J."/>
            <person name="Kahmann R."/>
            <person name="Boelker M."/>
            <person name="Ma L.-J."/>
            <person name="Brefort T."/>
            <person name="Saville B.J."/>
            <person name="Banuett F."/>
            <person name="Kronstad J.W."/>
            <person name="Gold S.E."/>
            <person name="Mueller O."/>
            <person name="Perlin M.H."/>
            <person name="Woesten H.A.B."/>
            <person name="de Vries R."/>
            <person name="Ruiz-Herrera J."/>
            <person name="Reynaga-Pena C.G."/>
            <person name="Snetselaar K."/>
            <person name="McCann M."/>
            <person name="Perez-Martin J."/>
            <person name="Feldbruegge M."/>
            <person name="Basse C.W."/>
            <person name="Steinberg G."/>
            <person name="Ibeas J.I."/>
            <person name="Holloman W."/>
            <person name="Guzman P."/>
            <person name="Farman M.L."/>
            <person name="Stajich J.E."/>
            <person name="Sentandreu R."/>
            <person name="Gonzalez-Prieto J.M."/>
            <person name="Kennell J.C."/>
            <person name="Molina L."/>
            <person name="Schirawski J."/>
            <person name="Mendoza-Mendoza A."/>
            <person name="Greilinger D."/>
            <person name="Muench K."/>
            <person name="Roessel N."/>
            <person name="Scherer M."/>
            <person name="Vranes M."/>
            <person name="Ladendorf O."/>
            <person name="Vincon V."/>
            <person name="Fuchs U."/>
            <person name="Sandrock B."/>
            <person name="Meng S."/>
            <person name="Ho E.C.H."/>
            <person name="Cahill M.J."/>
            <person name="Boyce K.J."/>
            <person name="Klose J."/>
            <person name="Klosterman S.J."/>
            <person name="Deelstra H.J."/>
            <person name="Ortiz-Castellanos L."/>
            <person name="Li W."/>
            <person name="Sanchez-Alonso P."/>
            <person name="Schreier P.H."/>
            <person name="Haeuser-Hahn I."/>
            <person name="Vaupel M."/>
            <person name="Koopmann E."/>
            <person name="Friedrich G."/>
            <person name="Voss H."/>
            <person name="Schlueter T."/>
            <person name="Margolis J."/>
            <person name="Platt D."/>
            <person name="Swimmer C."/>
            <person name="Gnirke A."/>
            <person name="Chen F."/>
            <person name="Vysotskaia V."/>
            <person name="Mannhaupt G."/>
            <person name="Gueldener U."/>
            <person name="Muensterkoetter M."/>
            <person name="Haase D."/>
            <person name="Oesterheld M."/>
            <person name="Mewes H.-W."/>
            <person name="Mauceli E.W."/>
            <person name="DeCaprio D."/>
            <person name="Wade C.M."/>
            <person name="Butler J."/>
            <person name="Young S.K."/>
            <person name="Jaffe D.B."/>
            <person name="Calvo S.E."/>
            <person name="Nusbaum C."/>
            <person name="Galagan J.E."/>
            <person name="Birren B.W."/>
        </authorList>
    </citation>
    <scope>NUCLEOTIDE SEQUENCE [LARGE SCALE GENOMIC DNA]</scope>
    <source>
        <strain>DSM 14603 / FGSC 9021 / UM521</strain>
    </source>
</reference>
<reference key="2">
    <citation type="submission" date="2014-09" db="EMBL/GenBank/DDBJ databases">
        <authorList>
            <person name="Gueldener U."/>
            <person name="Muensterkoetter M."/>
            <person name="Walter M.C."/>
            <person name="Mannhaupt G."/>
            <person name="Kahmann R."/>
        </authorList>
    </citation>
    <scope>GENOME REANNOTATION</scope>
    <source>
        <strain>DSM 14603 / FGSC 9021 / UM521</strain>
    </source>
</reference>
<reference key="3">
    <citation type="journal article" date="2005" name="Eukaryot. Cell">
        <title>Role for RNA-binding proteins implicated in pathogenic development of Ustilago maydis.</title>
        <authorList>
            <person name="Becht P."/>
            <person name="Vollmeister E."/>
            <person name="Feldbruegge M."/>
        </authorList>
    </citation>
    <scope>FUNCTION</scope>
    <scope>DISRUPTION PHENOTYPE</scope>
</reference>
<reference key="4">
    <citation type="journal article" date="2006" name="J. Cell Sci.">
        <title>The RNA-binding protein Rrm4 is essential for polarity in Ustilago maydis and shuttles along microtubules.</title>
        <authorList>
            <person name="Becht P."/>
            <person name="Koenig J."/>
            <person name="Feldbruegge M."/>
        </authorList>
    </citation>
    <scope>FUNCTION</scope>
    <scope>DISRUPTION PHENOTYPE</scope>
    <scope>DOMAIN</scope>
    <scope>SUBUNIT</scope>
    <scope>SUBCELLULAR LOCATION</scope>
    <scope>MUTAGENESIS OF 116-THR--PHE-119; 365-PHE--PHE-368; PHE-740; ILE-743; ALA-751 AND LYS-753</scope>
</reference>
<reference key="5">
    <citation type="journal article" date="2009" name="EMBO J.">
        <title>The fungal RNA-binding protein Rrm4 mediates long-distance transport of ubi1 and rho3 mRNAs.</title>
        <authorList>
            <person name="Koenig J."/>
            <person name="Baumann S."/>
            <person name="Koepke J."/>
            <person name="Pohlmann T."/>
            <person name="Zarnack K."/>
            <person name="Feldbruegge M."/>
        </authorList>
    </citation>
    <scope>FUNCTION</scope>
    <scope>DOMAIN</scope>
    <scope>SUBUNIT</scope>
    <scope>SUBCELLULAR LOCATION</scope>
</reference>
<reference key="6">
    <citation type="journal article" date="2012" name="J. Cell Sci.">
        <title>Kinesin-3 and dynein mediate microtubule-dependent co-transport of mRNPs and endosomes.</title>
        <authorList>
            <person name="Baumann S."/>
            <person name="Pohlmann T."/>
            <person name="Jungbluth M."/>
            <person name="Brachmann A."/>
            <person name="Feldbruegge M."/>
        </authorList>
    </citation>
    <scope>FUNCTION</scope>
    <scope>SUBUNIT</scope>
    <scope>SUBCELLULAR LOCATION</scope>
</reference>
<reference key="7">
    <citation type="journal article" date="2014" name="EMBO Rep.">
        <title>Endosomal transport of septin mRNA and protein indicates local translation on endosomes and is required for correct septin filamentation.</title>
        <authorList>
            <person name="Baumann S."/>
            <person name="Koenig J."/>
            <person name="Koepke J."/>
            <person name="Feldbruegge M."/>
        </authorList>
    </citation>
    <scope>FUNCTION</scope>
    <scope>SUBCELLULAR LOCATION</scope>
</reference>
<reference key="8">
    <citation type="journal article" date="2015" name="Elife">
        <title>A FYVE zinc finger domain protein specifically links mRNA transport to endosome trafficking.</title>
        <authorList>
            <person name="Pohlmann T."/>
            <person name="Baumann S."/>
            <person name="Haag C."/>
            <person name="Albrecht M."/>
            <person name="Feldbruegge M."/>
        </authorList>
    </citation>
    <scope>FUNCTION</scope>
    <scope>DISRUPTION PHENOTYPE</scope>
    <scope>INTERACTION WITH UPA1</scope>
    <scope>SUBCELLULAR LOCATION</scope>
</reference>
<reference key="9">
    <citation type="journal article" date="2019" name="EMBO Rep.">
        <title>The key protein of endosomal mRNP transport Rrm4 binds translational landmark sites of cargo mRNAs.</title>
        <authorList>
            <person name="Olgeiser L."/>
            <person name="Haag C."/>
            <person name="Boerner S."/>
            <person name="Ule J."/>
            <person name="Busch A."/>
            <person name="Koepke J."/>
            <person name="Koenig J."/>
            <person name="Feldbruegge M."/>
            <person name="Zarnack K."/>
        </authorList>
    </citation>
    <scope>FUNCTION</scope>
    <scope>DOMAIN</scope>
    <scope>MRNA-BINDING</scope>
</reference>
<reference key="10">
    <citation type="journal article" date="2019" name="EMBO Rep.">
        <title>The multi PAM2 protein Upa2 functions as novel core component of endosomal mRNA transport.</title>
        <authorList>
            <person name="Jankowski S."/>
            <person name="Pohlmann T."/>
            <person name="Baumann S."/>
            <person name="Muentjes K."/>
            <person name="Devan S.K."/>
            <person name="Zander S."/>
            <person name="Feldbruegge M."/>
        </authorList>
    </citation>
    <scope>FUNCTION</scope>
    <scope>SUBUNIT</scope>
</reference>
<reference key="11">
    <citation type="journal article" date="2019" name="Fungal Genet. Biol.">
        <title>Core components of endosomal mRNA transport are evolutionarily conserved in fungi.</title>
        <authorList>
            <person name="Mueller J."/>
            <person name="Pohlmann T."/>
            <person name="Feldbruegge M."/>
        </authorList>
    </citation>
    <scope>FUNCTION</scope>
    <scope>SUBUNIT</scope>
</reference>